<sequence length="1342" mass="150811">MHQAITSAQIAHWFTVGAQFANIRITNEAKKAEAEDNATEVRSDKAFSELSSPEKEKSDDGNQRRKRAQLPTGPGTSPPSLASYEYPILPITKNRQELVSLIENNSVVIIRGATGSGKTTQLPQFILDHYAERNIPCNLVVTQPRKIGATSIARWVARERKCTLGSLVGYQVGLEKMATEHTKLIYVTTGVLLQKLVSSKTLTEYSHIFIDEVHERSEELDFLLLVVRKLLRSNSRYVKVILMSATINCIEFAEYFGSPIRNQMNPAYVFEVEGAPYAVEEYYLDELKTMLPVGVNLDLTLPQDPYITEEMYNVAVSLIQSFDEMEAKDHRRSEQTGSTTHPERGSVLVFLPGLAEIQYMKEALSKLVRKRLQVYPLHSTVTLEEQNGVFLVPVPGYRKIILSTNIAESSVTVPDVKYVIDFCLVRQLACDKETNYRCLRITWASKTSCNQRRGRAGRVSKGFCYRLVTRHFWENEIPNFSIPEMLRSPLASTLLKVKLLDMGDPRSVLSTALTPPILGDIERTVLQLKQIGALSVQSNSQRQFDGDLTFLGRVLAQLPVDLQLGKLIVLGHVFGCLEECLIIAASLSLKSFFAMPSLQQLAGYRSKLSFAQNVPSDFIAYVNAFKAWYTSRAKGELRHPKDELEWGKENCIQIKRIREVAELFEDLKKRVSRFNMHISSSSNPTDYTSLHKQRFILQVVIAGALFPNYFSQGEIDEQLASKELSGNDPKTTILIRNLPPFAFLCYKQLQSLFRQCGQVKSIAFDGSRAYVEFHRSCVRESGVLHEVLLALLRSRHTPALHLQVHHADEVEFHAKGKPIAHLRYTRVNVDVQSHTVSPVGVLSSSVNPEKLPTSRDFVINITEVIDVGHFWGFQTDENSVEKQCQLTAALNMRDLRPLSVSLYPNLLCVAPFKDGQQMAKYYRAKVLHILGSNVEVFFVDFGNTTVVPSSSLRELPSDLMTPAFQAQEFCIARMAPSAQSLILGDRWSSRARNRFKTLTSGRSAIVSLFSILHGVMRVDLHISTETGDVSVADLLVQEGHACHTPESFESQQSHEVLISLYEDMASGRFTPSFASGSLNSRMEEDKQLINQLLLHFCSSGSSAPKCKAVVHGPSSPHKVNFHSMSKVSNFRSVNIERDSINCVMVNENPQDWHERMLVAASVSLSASGSRILLKETSLMPHIHGLPSLVTMLFTPVMELRTNEDRTCFTGALCGLGWNSVSQEAVLPEHDIEIAFDVKFEIEDITEINALRGTVNRLVCDGPNGLLNLSQEKISSLQEEARERLIRLFIKTPSRPECTPVYHDKFKKWNLVDRSQQMEIQEKDDGKSKGVLFQLHPITLLNM</sequence>
<organism>
    <name type="scientific">Danio rerio</name>
    <name type="common">Zebrafish</name>
    <name type="synonym">Brachydanio rerio</name>
    <dbReference type="NCBI Taxonomy" id="7955"/>
    <lineage>
        <taxon>Eukaryota</taxon>
        <taxon>Metazoa</taxon>
        <taxon>Chordata</taxon>
        <taxon>Craniata</taxon>
        <taxon>Vertebrata</taxon>
        <taxon>Euteleostomi</taxon>
        <taxon>Actinopterygii</taxon>
        <taxon>Neopterygii</taxon>
        <taxon>Teleostei</taxon>
        <taxon>Ostariophysi</taxon>
        <taxon>Cypriniformes</taxon>
        <taxon>Danionidae</taxon>
        <taxon>Danioninae</taxon>
        <taxon>Danio</taxon>
    </lineage>
</organism>
<feature type="chain" id="PRO_0000391909" description="ATP-dependent RNA helicase TDRD9">
    <location>
        <begin position="1"/>
        <end position="1342"/>
    </location>
</feature>
<feature type="domain" description="Helicase ATP-binding" evidence="3">
    <location>
        <begin position="99"/>
        <end position="265"/>
    </location>
</feature>
<feature type="domain" description="Helicase C-terminal" evidence="4">
    <location>
        <begin position="317"/>
        <end position="503"/>
    </location>
</feature>
<feature type="domain" description="Tudor" evidence="2">
    <location>
        <begin position="901"/>
        <end position="962"/>
    </location>
</feature>
<feature type="region of interest" description="Disordered" evidence="5">
    <location>
        <begin position="31"/>
        <end position="81"/>
    </location>
</feature>
<feature type="short sequence motif" description="DEAH box" evidence="1">
    <location>
        <begin position="211"/>
        <end position="214"/>
    </location>
</feature>
<feature type="compositionally biased region" description="Basic and acidic residues" evidence="5">
    <location>
        <begin position="31"/>
        <end position="63"/>
    </location>
</feature>
<feature type="binding site" evidence="3">
    <location>
        <begin position="112"/>
        <end position="119"/>
    </location>
    <ligand>
        <name>ATP</name>
        <dbReference type="ChEBI" id="CHEBI:30616"/>
    </ligand>
</feature>
<feature type="sequence conflict" description="In Ref. 1; ACF35262." evidence="6" ref="1">
    <original>S</original>
    <variation>G</variation>
    <location>
        <position position="151"/>
    </location>
</feature>
<dbReference type="EC" id="3.6.4.13" evidence="1"/>
<dbReference type="EMBL" id="EU817488">
    <property type="protein sequence ID" value="ACF35262.1"/>
    <property type="molecule type" value="mRNA"/>
</dbReference>
<dbReference type="EMBL" id="BX072537">
    <property type="protein sequence ID" value="CAX14617.1"/>
    <property type="molecule type" value="Genomic_DNA"/>
</dbReference>
<dbReference type="RefSeq" id="NP_001123984.1">
    <property type="nucleotide sequence ID" value="NM_001130512.1"/>
</dbReference>
<dbReference type="SMR" id="B8A4F4"/>
<dbReference type="FunCoup" id="B8A4F4">
    <property type="interactions" value="1722"/>
</dbReference>
<dbReference type="IntAct" id="B8A4F4">
    <property type="interactions" value="2"/>
</dbReference>
<dbReference type="MINT" id="B8A4F4"/>
<dbReference type="STRING" id="7955.ENSDARP00000011360"/>
<dbReference type="PaxDb" id="7955-ENSDARP00000104975"/>
<dbReference type="PeptideAtlas" id="B8A4F4"/>
<dbReference type="Ensembl" id="ENSDART00000019202">
    <property type="protein sequence ID" value="ENSDARP00000011360"/>
    <property type="gene ID" value="ENSDARG00000013453"/>
</dbReference>
<dbReference type="GeneID" id="553222"/>
<dbReference type="KEGG" id="dre:553222"/>
<dbReference type="AGR" id="ZFIN:ZDB-GENE-090313-193"/>
<dbReference type="CTD" id="122402"/>
<dbReference type="ZFIN" id="ZDB-GENE-090313-193">
    <property type="gene designation" value="tdrd9"/>
</dbReference>
<dbReference type="eggNOG" id="KOG0920">
    <property type="taxonomic scope" value="Eukaryota"/>
</dbReference>
<dbReference type="InParanoid" id="B8A4F4"/>
<dbReference type="OMA" id="QRSAYCS"/>
<dbReference type="OrthoDB" id="66977at2759"/>
<dbReference type="PhylomeDB" id="B8A4F4"/>
<dbReference type="PRO" id="PR:B8A4F4"/>
<dbReference type="Proteomes" id="UP000000437">
    <property type="component" value="Chromosome 13"/>
</dbReference>
<dbReference type="Bgee" id="ENSDARG00000013453">
    <property type="expression patterns" value="Expressed in testis and 13 other cell types or tissues"/>
</dbReference>
<dbReference type="GO" id="GO:0005737">
    <property type="term" value="C:cytoplasm"/>
    <property type="evidence" value="ECO:0000318"/>
    <property type="project" value="GO_Central"/>
</dbReference>
<dbReference type="GO" id="GO:0005634">
    <property type="term" value="C:nucleus"/>
    <property type="evidence" value="ECO:0000250"/>
    <property type="project" value="UniProtKB"/>
</dbReference>
<dbReference type="GO" id="GO:0071547">
    <property type="term" value="C:piP-body"/>
    <property type="evidence" value="ECO:0000250"/>
    <property type="project" value="UniProtKB"/>
</dbReference>
<dbReference type="GO" id="GO:0005524">
    <property type="term" value="F:ATP binding"/>
    <property type="evidence" value="ECO:0007669"/>
    <property type="project" value="UniProtKB-KW"/>
</dbReference>
<dbReference type="GO" id="GO:0016887">
    <property type="term" value="F:ATP hydrolysis activity"/>
    <property type="evidence" value="ECO:0000250"/>
    <property type="project" value="UniProtKB"/>
</dbReference>
<dbReference type="GO" id="GO:0004386">
    <property type="term" value="F:helicase activity"/>
    <property type="evidence" value="ECO:0000318"/>
    <property type="project" value="GO_Central"/>
</dbReference>
<dbReference type="GO" id="GO:0003723">
    <property type="term" value="F:RNA binding"/>
    <property type="evidence" value="ECO:0000318"/>
    <property type="project" value="GO_Central"/>
</dbReference>
<dbReference type="GO" id="GO:0003724">
    <property type="term" value="F:RNA helicase activity"/>
    <property type="evidence" value="ECO:0007669"/>
    <property type="project" value="UniProtKB-EC"/>
</dbReference>
<dbReference type="GO" id="GO:0030154">
    <property type="term" value="P:cell differentiation"/>
    <property type="evidence" value="ECO:0007669"/>
    <property type="project" value="UniProtKB-KW"/>
</dbReference>
<dbReference type="GO" id="GO:0009566">
    <property type="term" value="P:fertilization"/>
    <property type="evidence" value="ECO:0000250"/>
    <property type="project" value="UniProtKB"/>
</dbReference>
<dbReference type="GO" id="GO:0007141">
    <property type="term" value="P:male meiosis I"/>
    <property type="evidence" value="ECO:0000250"/>
    <property type="project" value="UniProtKB"/>
</dbReference>
<dbReference type="GO" id="GO:0007140">
    <property type="term" value="P:male meiotic nuclear division"/>
    <property type="evidence" value="ECO:0000250"/>
    <property type="project" value="UniProtKB"/>
</dbReference>
<dbReference type="GO" id="GO:0034587">
    <property type="term" value="P:piRNA processing"/>
    <property type="evidence" value="ECO:0000250"/>
    <property type="project" value="UniProtKB"/>
</dbReference>
<dbReference type="GO" id="GO:0007283">
    <property type="term" value="P:spermatogenesis"/>
    <property type="evidence" value="ECO:0000250"/>
    <property type="project" value="UniProtKB"/>
</dbReference>
<dbReference type="GO" id="GO:0141196">
    <property type="term" value="P:transposable element silencing by piRNA-mediated DNA methylation"/>
    <property type="evidence" value="ECO:0000250"/>
    <property type="project" value="UniProtKB"/>
</dbReference>
<dbReference type="GO" id="GO:0141006">
    <property type="term" value="P:transposable element silencing by piRNA-mediated heterochromatin formation"/>
    <property type="evidence" value="ECO:0000250"/>
    <property type="project" value="UniProtKB"/>
</dbReference>
<dbReference type="CDD" id="cd17988">
    <property type="entry name" value="DEXHc_TDRD9"/>
    <property type="match status" value="1"/>
</dbReference>
<dbReference type="CDD" id="cd18791">
    <property type="entry name" value="SF2_C_RHA"/>
    <property type="match status" value="1"/>
</dbReference>
<dbReference type="CDD" id="cd20431">
    <property type="entry name" value="Tudor_TDRD9"/>
    <property type="match status" value="1"/>
</dbReference>
<dbReference type="FunFam" id="3.40.50.300:FF:001113">
    <property type="entry name" value="ATP-dependent RNA helicase TDRD9"/>
    <property type="match status" value="1"/>
</dbReference>
<dbReference type="FunFam" id="3.40.50.300:FF:000946">
    <property type="entry name" value="putative ATP-dependent RNA helicase TDRD9"/>
    <property type="match status" value="1"/>
</dbReference>
<dbReference type="FunFam" id="1.20.120.1080:FF:000081">
    <property type="entry name" value="Tudor domain containing 9"/>
    <property type="match status" value="1"/>
</dbReference>
<dbReference type="Gene3D" id="1.20.120.1080">
    <property type="match status" value="1"/>
</dbReference>
<dbReference type="Gene3D" id="2.30.30.140">
    <property type="match status" value="1"/>
</dbReference>
<dbReference type="Gene3D" id="2.40.50.90">
    <property type="match status" value="1"/>
</dbReference>
<dbReference type="Gene3D" id="3.40.50.300">
    <property type="entry name" value="P-loop containing nucleotide triphosphate hydrolases"/>
    <property type="match status" value="2"/>
</dbReference>
<dbReference type="InterPro" id="IPR011545">
    <property type="entry name" value="DEAD/DEAH_box_helicase_dom"/>
</dbReference>
<dbReference type="InterPro" id="IPR002464">
    <property type="entry name" value="DNA/RNA_helicase_DEAH_CS"/>
</dbReference>
<dbReference type="InterPro" id="IPR007502">
    <property type="entry name" value="Helicase-assoc_dom"/>
</dbReference>
<dbReference type="InterPro" id="IPR014001">
    <property type="entry name" value="Helicase_ATP-bd"/>
</dbReference>
<dbReference type="InterPro" id="IPR001650">
    <property type="entry name" value="Helicase_C-like"/>
</dbReference>
<dbReference type="InterPro" id="IPR027417">
    <property type="entry name" value="P-loop_NTPase"/>
</dbReference>
<dbReference type="InterPro" id="IPR035437">
    <property type="entry name" value="SNase_OB-fold_sf"/>
</dbReference>
<dbReference type="InterPro" id="IPR002999">
    <property type="entry name" value="Tudor"/>
</dbReference>
<dbReference type="InterPro" id="IPR047384">
    <property type="entry name" value="Tudor_TDRD9"/>
</dbReference>
<dbReference type="PANTHER" id="PTHR18934">
    <property type="entry name" value="ATP-DEPENDENT RNA HELICASE"/>
    <property type="match status" value="1"/>
</dbReference>
<dbReference type="PANTHER" id="PTHR18934:SF113">
    <property type="entry name" value="ATP-DEPENDENT RNA HELICASE TDRD9"/>
    <property type="match status" value="1"/>
</dbReference>
<dbReference type="Pfam" id="PF00270">
    <property type="entry name" value="DEAD"/>
    <property type="match status" value="1"/>
</dbReference>
<dbReference type="Pfam" id="PF21010">
    <property type="entry name" value="HA2_C"/>
    <property type="match status" value="1"/>
</dbReference>
<dbReference type="Pfam" id="PF00271">
    <property type="entry name" value="Helicase_C"/>
    <property type="match status" value="1"/>
</dbReference>
<dbReference type="Pfam" id="PF00567">
    <property type="entry name" value="TUDOR"/>
    <property type="match status" value="1"/>
</dbReference>
<dbReference type="SMART" id="SM00487">
    <property type="entry name" value="DEXDc"/>
    <property type="match status" value="1"/>
</dbReference>
<dbReference type="SMART" id="SM00847">
    <property type="entry name" value="HA2"/>
    <property type="match status" value="1"/>
</dbReference>
<dbReference type="SMART" id="SM00490">
    <property type="entry name" value="HELICc"/>
    <property type="match status" value="1"/>
</dbReference>
<dbReference type="SMART" id="SM00333">
    <property type="entry name" value="TUDOR"/>
    <property type="match status" value="1"/>
</dbReference>
<dbReference type="SUPFAM" id="SSF52540">
    <property type="entry name" value="P-loop containing nucleoside triphosphate hydrolases"/>
    <property type="match status" value="1"/>
</dbReference>
<dbReference type="SUPFAM" id="SSF63748">
    <property type="entry name" value="Tudor/PWWP/MBT"/>
    <property type="match status" value="1"/>
</dbReference>
<dbReference type="PROSITE" id="PS00690">
    <property type="entry name" value="DEAH_ATP_HELICASE"/>
    <property type="match status" value="1"/>
</dbReference>
<dbReference type="PROSITE" id="PS51192">
    <property type="entry name" value="HELICASE_ATP_BIND_1"/>
    <property type="match status" value="1"/>
</dbReference>
<dbReference type="PROSITE" id="PS51194">
    <property type="entry name" value="HELICASE_CTER"/>
    <property type="match status" value="1"/>
</dbReference>
<dbReference type="PROSITE" id="PS50304">
    <property type="entry name" value="TUDOR"/>
    <property type="match status" value="1"/>
</dbReference>
<evidence type="ECO:0000250" key="1">
    <source>
        <dbReference type="UniProtKB" id="Q14BI7"/>
    </source>
</evidence>
<evidence type="ECO:0000255" key="2">
    <source>
        <dbReference type="PROSITE-ProRule" id="PRU00211"/>
    </source>
</evidence>
<evidence type="ECO:0000255" key="3">
    <source>
        <dbReference type="PROSITE-ProRule" id="PRU00541"/>
    </source>
</evidence>
<evidence type="ECO:0000255" key="4">
    <source>
        <dbReference type="PROSITE-ProRule" id="PRU00542"/>
    </source>
</evidence>
<evidence type="ECO:0000256" key="5">
    <source>
        <dbReference type="SAM" id="MobiDB-lite"/>
    </source>
</evidence>
<evidence type="ECO:0000305" key="6"/>
<comment type="function">
    <text evidence="1">ATP-binding RNA helicase which plays a central role during spermatogenesis by repressing transposable elements and preventing their mobilization, which is essential for the germline integrity. Acts via the piRNA metabolic process, which mediates the repression of transposable elements during meiosis by forming complexes composed of piRNAs and Piwi proteins and governs the methylation and subsequent repression of transposons. Acts downstream of piRNA biogenesis: exclusively required for transposon silencing in the nucleus, suggesting that it acts as a nuclear effector in the nucleus together with piwil4.</text>
</comment>
<comment type="catalytic activity">
    <reaction evidence="1">
        <text>ATP + H2O = ADP + phosphate + H(+)</text>
        <dbReference type="Rhea" id="RHEA:13065"/>
        <dbReference type="ChEBI" id="CHEBI:15377"/>
        <dbReference type="ChEBI" id="CHEBI:15378"/>
        <dbReference type="ChEBI" id="CHEBI:30616"/>
        <dbReference type="ChEBI" id="CHEBI:43474"/>
        <dbReference type="ChEBI" id="CHEBI:456216"/>
        <dbReference type="EC" id="3.6.4.13"/>
    </reaction>
</comment>
<comment type="subcellular location">
    <subcellularLocation>
        <location evidence="1">Cytoplasm</location>
    </subcellularLocation>
    <subcellularLocation>
        <location evidence="1">Nucleus</location>
    </subcellularLocation>
    <text evidence="1">Component of the nuage, also named P granule, a germ-cell-specific organelle required to repress transposon activity during meiosis. Specifically localizes to piP-bodies, a subset of the nuage which contains secondary piRNAs. PIWIL2 is required for its localization to piP-bodies.</text>
</comment>
<comment type="similarity">
    <text evidence="6">Belongs to the DEAD box helicase family. DEAH subfamily.</text>
</comment>
<protein>
    <recommendedName>
        <fullName evidence="6">ATP-dependent RNA helicase TDRD9</fullName>
        <ecNumber evidence="1">3.6.4.13</ecNumber>
    </recommendedName>
    <alternativeName>
        <fullName evidence="6">Tudor domain-containing protein 9</fullName>
    </alternativeName>
</protein>
<proteinExistence type="evidence at transcript level"/>
<accession>B8A4F4</accession>
<accession>B5A7D9</accession>
<gene>
    <name evidence="1" type="primary">tdrd9</name>
    <name type="ORF">si:dkey-15f17.9</name>
</gene>
<reference key="1">
    <citation type="submission" date="2008-06" db="EMBL/GenBank/DDBJ databases">
        <title>Expression and localization of zebrafish spindle-E.</title>
        <authorList>
            <person name="Honda J."/>
            <person name="Beh L."/>
            <person name="Wong Q.Y."/>
            <person name="Orban L."/>
            <person name="Kai T."/>
        </authorList>
    </citation>
    <scope>NUCLEOTIDE SEQUENCE [MRNA]</scope>
    <source>
        <strain>AB</strain>
    </source>
</reference>
<reference key="2">
    <citation type="journal article" date="2013" name="Nature">
        <title>The zebrafish reference genome sequence and its relationship to the human genome.</title>
        <authorList>
            <person name="Howe K."/>
            <person name="Clark M.D."/>
            <person name="Torroja C.F."/>
            <person name="Torrance J."/>
            <person name="Berthelot C."/>
            <person name="Muffato M."/>
            <person name="Collins J.E."/>
            <person name="Humphray S."/>
            <person name="McLaren K."/>
            <person name="Matthews L."/>
            <person name="McLaren S."/>
            <person name="Sealy I."/>
            <person name="Caccamo M."/>
            <person name="Churcher C."/>
            <person name="Scott C."/>
            <person name="Barrett J.C."/>
            <person name="Koch R."/>
            <person name="Rauch G.J."/>
            <person name="White S."/>
            <person name="Chow W."/>
            <person name="Kilian B."/>
            <person name="Quintais L.T."/>
            <person name="Guerra-Assuncao J.A."/>
            <person name="Zhou Y."/>
            <person name="Gu Y."/>
            <person name="Yen J."/>
            <person name="Vogel J.H."/>
            <person name="Eyre T."/>
            <person name="Redmond S."/>
            <person name="Banerjee R."/>
            <person name="Chi J."/>
            <person name="Fu B."/>
            <person name="Langley E."/>
            <person name="Maguire S.F."/>
            <person name="Laird G.K."/>
            <person name="Lloyd D."/>
            <person name="Kenyon E."/>
            <person name="Donaldson S."/>
            <person name="Sehra H."/>
            <person name="Almeida-King J."/>
            <person name="Loveland J."/>
            <person name="Trevanion S."/>
            <person name="Jones M."/>
            <person name="Quail M."/>
            <person name="Willey D."/>
            <person name="Hunt A."/>
            <person name="Burton J."/>
            <person name="Sims S."/>
            <person name="McLay K."/>
            <person name="Plumb B."/>
            <person name="Davis J."/>
            <person name="Clee C."/>
            <person name="Oliver K."/>
            <person name="Clark R."/>
            <person name="Riddle C."/>
            <person name="Elliot D."/>
            <person name="Threadgold G."/>
            <person name="Harden G."/>
            <person name="Ware D."/>
            <person name="Begum S."/>
            <person name="Mortimore B."/>
            <person name="Kerry G."/>
            <person name="Heath P."/>
            <person name="Phillimore B."/>
            <person name="Tracey A."/>
            <person name="Corby N."/>
            <person name="Dunn M."/>
            <person name="Johnson C."/>
            <person name="Wood J."/>
            <person name="Clark S."/>
            <person name="Pelan S."/>
            <person name="Griffiths G."/>
            <person name="Smith M."/>
            <person name="Glithero R."/>
            <person name="Howden P."/>
            <person name="Barker N."/>
            <person name="Lloyd C."/>
            <person name="Stevens C."/>
            <person name="Harley J."/>
            <person name="Holt K."/>
            <person name="Panagiotidis G."/>
            <person name="Lovell J."/>
            <person name="Beasley H."/>
            <person name="Henderson C."/>
            <person name="Gordon D."/>
            <person name="Auger K."/>
            <person name="Wright D."/>
            <person name="Collins J."/>
            <person name="Raisen C."/>
            <person name="Dyer L."/>
            <person name="Leung K."/>
            <person name="Robertson L."/>
            <person name="Ambridge K."/>
            <person name="Leongamornlert D."/>
            <person name="McGuire S."/>
            <person name="Gilderthorp R."/>
            <person name="Griffiths C."/>
            <person name="Manthravadi D."/>
            <person name="Nichol S."/>
            <person name="Barker G."/>
            <person name="Whitehead S."/>
            <person name="Kay M."/>
            <person name="Brown J."/>
            <person name="Murnane C."/>
            <person name="Gray E."/>
            <person name="Humphries M."/>
            <person name="Sycamore N."/>
            <person name="Barker D."/>
            <person name="Saunders D."/>
            <person name="Wallis J."/>
            <person name="Babbage A."/>
            <person name="Hammond S."/>
            <person name="Mashreghi-Mohammadi M."/>
            <person name="Barr L."/>
            <person name="Martin S."/>
            <person name="Wray P."/>
            <person name="Ellington A."/>
            <person name="Matthews N."/>
            <person name="Ellwood M."/>
            <person name="Woodmansey R."/>
            <person name="Clark G."/>
            <person name="Cooper J."/>
            <person name="Tromans A."/>
            <person name="Grafham D."/>
            <person name="Skuce C."/>
            <person name="Pandian R."/>
            <person name="Andrews R."/>
            <person name="Harrison E."/>
            <person name="Kimberley A."/>
            <person name="Garnett J."/>
            <person name="Fosker N."/>
            <person name="Hall R."/>
            <person name="Garner P."/>
            <person name="Kelly D."/>
            <person name="Bird C."/>
            <person name="Palmer S."/>
            <person name="Gehring I."/>
            <person name="Berger A."/>
            <person name="Dooley C.M."/>
            <person name="Ersan-Urun Z."/>
            <person name="Eser C."/>
            <person name="Geiger H."/>
            <person name="Geisler M."/>
            <person name="Karotki L."/>
            <person name="Kirn A."/>
            <person name="Konantz J."/>
            <person name="Konantz M."/>
            <person name="Oberlander M."/>
            <person name="Rudolph-Geiger S."/>
            <person name="Teucke M."/>
            <person name="Lanz C."/>
            <person name="Raddatz G."/>
            <person name="Osoegawa K."/>
            <person name="Zhu B."/>
            <person name="Rapp A."/>
            <person name="Widaa S."/>
            <person name="Langford C."/>
            <person name="Yang F."/>
            <person name="Schuster S.C."/>
            <person name="Carter N.P."/>
            <person name="Harrow J."/>
            <person name="Ning Z."/>
            <person name="Herrero J."/>
            <person name="Searle S.M."/>
            <person name="Enright A."/>
            <person name="Geisler R."/>
            <person name="Plasterk R.H."/>
            <person name="Lee C."/>
            <person name="Westerfield M."/>
            <person name="de Jong P.J."/>
            <person name="Zon L.I."/>
            <person name="Postlethwait J.H."/>
            <person name="Nusslein-Volhard C."/>
            <person name="Hubbard T.J."/>
            <person name="Roest Crollius H."/>
            <person name="Rogers J."/>
            <person name="Stemple D.L."/>
        </authorList>
    </citation>
    <scope>NUCLEOTIDE SEQUENCE [LARGE SCALE GENOMIC DNA]</scope>
    <source>
        <strain>Tuebingen</strain>
    </source>
</reference>
<keyword id="KW-0067">ATP-binding</keyword>
<keyword id="KW-0963">Cytoplasm</keyword>
<keyword id="KW-0217">Developmental protein</keyword>
<keyword id="KW-0221">Differentiation</keyword>
<keyword id="KW-0347">Helicase</keyword>
<keyword id="KW-0378">Hydrolase</keyword>
<keyword id="KW-0469">Meiosis</keyword>
<keyword id="KW-0547">Nucleotide-binding</keyword>
<keyword id="KW-0539">Nucleus</keyword>
<keyword id="KW-1185">Reference proteome</keyword>
<keyword id="KW-0943">RNA-mediated gene silencing</keyword>
<keyword id="KW-0744">Spermatogenesis</keyword>
<name>TDRD9_DANRE</name>